<protein>
    <recommendedName>
        <fullName evidence="1">Leucine--tRNA ligase</fullName>
        <ecNumber evidence="1">6.1.1.4</ecNumber>
    </recommendedName>
    <alternativeName>
        <fullName evidence="1">Leucyl-tRNA synthetase</fullName>
        <shortName evidence="1">LeuRS</shortName>
    </alternativeName>
</protein>
<sequence>MTESPTTTPGSTSGAPSGVPSGVNDAESDAPRHRYTAELAAGVERTWQQNWARLGTFNVPNPVGSLAPSDGSPVPEDKLFVQDMFPYPSGEGLHVGHPLGYIATDVFARYHRMKGRNVLHALGFDAFGLPAEQYAVQTGTHPRTRTEANVVNFRRQLGRLGLGHDSRRSFSTTDVEFYKWTQWIFLQIYNAWFDAAANKARPISELVAEFDSGARSLVDGRDWSTLSAGERADVIDDHRLVYRADSMVNWCPGLGTVLANEEVTSDGRSDRGNFPVFRKRLRQWMMRITAYSDRLLDDLDVLDWPDQVKTMQRNWIGRSTGASALFTATRSNGETVGLEVFTTRPDTLFGATYLVLAPEHDLVDDLVGAGWPAGVDPLWTGGGATPAEAVAAYRRAIAVKSDLERQESKEKTGVFLGSHAINPATGQPVPIFIADYVLAGYGTGAIMAVPGHDQRDWDFARALGLPVVEVIAGGDISQAAYTGDGVLVNSGFLDGMSVGEAKQAITARLESDGYGQARIEFKLRDWLFARQRYWGEPFPIVYDADGRPHALDESALPVELPDVPDYSPVLFDPDDANSEPSPPLGKATEWLHVELDLGDGLKPYSRDTNVMPQWAGSSWYELRYTDPHNADRFCAKENETYWMGPRPAEHGPDDPGGVDLYVGGAEHAVLHLLYARFWHKVLYDLGHVSSREPYRKLINQGYIQAFAYTDARGSYVPAEEVIERDGGFVYPGADGEIEVFQEFGKIGKSLKNSISPDEICDDYGADTLRVYEMSMGPIEASRPWATKDVIGAHRFLQRVWRLVIDENTGEILVADTPAELDTDTLRALHRAIAGVAEDYAALRNNTAVAKLIEYTNFLTKRHRDAVPRAVIEPLVLMVAPLAPHLAEELWQRLGHTTSLAHGPFPAADPAYLIDDTVEYPVQVNGKVRGRVVVAADADDDAVKAAALADQKVQAFLAGASPRKVIVVAGRLVNLVV</sequence>
<keyword id="KW-0030">Aminoacyl-tRNA synthetase</keyword>
<keyword id="KW-0067">ATP-binding</keyword>
<keyword id="KW-0963">Cytoplasm</keyword>
<keyword id="KW-0436">Ligase</keyword>
<keyword id="KW-0547">Nucleotide-binding</keyword>
<keyword id="KW-0648">Protein biosynthesis</keyword>
<name>SYL_MYCUA</name>
<feature type="chain" id="PRO_1000009376" description="Leucine--tRNA ligase">
    <location>
        <begin position="1"/>
        <end position="976"/>
    </location>
</feature>
<feature type="region of interest" description="Disordered" evidence="2">
    <location>
        <begin position="1"/>
        <end position="34"/>
    </location>
</feature>
<feature type="short sequence motif" description="'HIGH' region">
    <location>
        <begin position="86"/>
        <end position="97"/>
    </location>
</feature>
<feature type="short sequence motif" description="'KMSKS' region">
    <location>
        <begin position="745"/>
        <end position="749"/>
    </location>
</feature>
<feature type="compositionally biased region" description="Low complexity" evidence="2">
    <location>
        <begin position="1"/>
        <end position="23"/>
    </location>
</feature>
<feature type="binding site" evidence="1">
    <location>
        <position position="748"/>
    </location>
    <ligand>
        <name>ATP</name>
        <dbReference type="ChEBI" id="CHEBI:30616"/>
    </ligand>
</feature>
<evidence type="ECO:0000255" key="1">
    <source>
        <dbReference type="HAMAP-Rule" id="MF_00049"/>
    </source>
</evidence>
<evidence type="ECO:0000256" key="2">
    <source>
        <dbReference type="SAM" id="MobiDB-lite"/>
    </source>
</evidence>
<comment type="catalytic activity">
    <reaction evidence="1">
        <text>tRNA(Leu) + L-leucine + ATP = L-leucyl-tRNA(Leu) + AMP + diphosphate</text>
        <dbReference type="Rhea" id="RHEA:11688"/>
        <dbReference type="Rhea" id="RHEA-COMP:9613"/>
        <dbReference type="Rhea" id="RHEA-COMP:9622"/>
        <dbReference type="ChEBI" id="CHEBI:30616"/>
        <dbReference type="ChEBI" id="CHEBI:33019"/>
        <dbReference type="ChEBI" id="CHEBI:57427"/>
        <dbReference type="ChEBI" id="CHEBI:78442"/>
        <dbReference type="ChEBI" id="CHEBI:78494"/>
        <dbReference type="ChEBI" id="CHEBI:456215"/>
        <dbReference type="EC" id="6.1.1.4"/>
    </reaction>
</comment>
<comment type="subcellular location">
    <subcellularLocation>
        <location evidence="1">Cytoplasm</location>
    </subcellularLocation>
</comment>
<comment type="similarity">
    <text evidence="1">Belongs to the class-I aminoacyl-tRNA synthetase family.</text>
</comment>
<organism>
    <name type="scientific">Mycobacterium ulcerans (strain Agy99)</name>
    <dbReference type="NCBI Taxonomy" id="362242"/>
    <lineage>
        <taxon>Bacteria</taxon>
        <taxon>Bacillati</taxon>
        <taxon>Actinomycetota</taxon>
        <taxon>Actinomycetes</taxon>
        <taxon>Mycobacteriales</taxon>
        <taxon>Mycobacteriaceae</taxon>
        <taxon>Mycobacterium</taxon>
        <taxon>Mycobacterium ulcerans group</taxon>
    </lineage>
</organism>
<accession>A0PKG2</accession>
<dbReference type="EC" id="6.1.1.4" evidence="1"/>
<dbReference type="EMBL" id="CP000325">
    <property type="protein sequence ID" value="ABL02831.1"/>
    <property type="molecule type" value="Genomic_DNA"/>
</dbReference>
<dbReference type="SMR" id="A0PKG2"/>
<dbReference type="KEGG" id="mul:MUL_0056"/>
<dbReference type="eggNOG" id="COG0495">
    <property type="taxonomic scope" value="Bacteria"/>
</dbReference>
<dbReference type="HOGENOM" id="CLU_004427_0_0_11"/>
<dbReference type="Proteomes" id="UP000000765">
    <property type="component" value="Chromosome"/>
</dbReference>
<dbReference type="GO" id="GO:0005829">
    <property type="term" value="C:cytosol"/>
    <property type="evidence" value="ECO:0007669"/>
    <property type="project" value="TreeGrafter"/>
</dbReference>
<dbReference type="GO" id="GO:0002161">
    <property type="term" value="F:aminoacyl-tRNA deacylase activity"/>
    <property type="evidence" value="ECO:0007669"/>
    <property type="project" value="InterPro"/>
</dbReference>
<dbReference type="GO" id="GO:0005524">
    <property type="term" value="F:ATP binding"/>
    <property type="evidence" value="ECO:0007669"/>
    <property type="project" value="UniProtKB-UniRule"/>
</dbReference>
<dbReference type="GO" id="GO:0004823">
    <property type="term" value="F:leucine-tRNA ligase activity"/>
    <property type="evidence" value="ECO:0007669"/>
    <property type="project" value="UniProtKB-UniRule"/>
</dbReference>
<dbReference type="GO" id="GO:0006429">
    <property type="term" value="P:leucyl-tRNA aminoacylation"/>
    <property type="evidence" value="ECO:0007669"/>
    <property type="project" value="UniProtKB-UniRule"/>
</dbReference>
<dbReference type="CDD" id="cd07958">
    <property type="entry name" value="Anticodon_Ia_Leu_BEm"/>
    <property type="match status" value="1"/>
</dbReference>
<dbReference type="FunFam" id="3.40.50.620:FF:000060">
    <property type="entry name" value="Leucine--tRNA ligase"/>
    <property type="match status" value="1"/>
</dbReference>
<dbReference type="FunFam" id="3.40.50.620:FF:000087">
    <property type="entry name" value="Leucine--tRNA ligase"/>
    <property type="match status" value="1"/>
</dbReference>
<dbReference type="FunFam" id="3.90.740.10:FF:000017">
    <property type="entry name" value="Leucine--tRNA ligase"/>
    <property type="match status" value="1"/>
</dbReference>
<dbReference type="FunFam" id="1.10.730.10:FF:000011">
    <property type="entry name" value="Leucine--tRNA ligase chloroplastic/mitochondrial"/>
    <property type="match status" value="1"/>
</dbReference>
<dbReference type="Gene3D" id="3.40.50.620">
    <property type="entry name" value="HUPs"/>
    <property type="match status" value="3"/>
</dbReference>
<dbReference type="Gene3D" id="1.10.730.10">
    <property type="entry name" value="Isoleucyl-tRNA Synthetase, Domain 1"/>
    <property type="match status" value="1"/>
</dbReference>
<dbReference type="Gene3D" id="3.90.740.10">
    <property type="entry name" value="Valyl/Leucyl/Isoleucyl-tRNA synthetase, editing domain"/>
    <property type="match status" value="1"/>
</dbReference>
<dbReference type="HAMAP" id="MF_00049_B">
    <property type="entry name" value="Leu_tRNA_synth_B"/>
    <property type="match status" value="1"/>
</dbReference>
<dbReference type="InterPro" id="IPR001412">
    <property type="entry name" value="aa-tRNA-synth_I_CS"/>
</dbReference>
<dbReference type="InterPro" id="IPR002302">
    <property type="entry name" value="Leu-tRNA-ligase"/>
</dbReference>
<dbReference type="InterPro" id="IPR025709">
    <property type="entry name" value="Leu_tRNA-synth_edit"/>
</dbReference>
<dbReference type="InterPro" id="IPR013155">
    <property type="entry name" value="M/V/L/I-tRNA-synth_anticd-bd"/>
</dbReference>
<dbReference type="InterPro" id="IPR015413">
    <property type="entry name" value="Methionyl/Leucyl_tRNA_Synth"/>
</dbReference>
<dbReference type="InterPro" id="IPR014729">
    <property type="entry name" value="Rossmann-like_a/b/a_fold"/>
</dbReference>
<dbReference type="InterPro" id="IPR009080">
    <property type="entry name" value="tRNAsynth_Ia_anticodon-bd"/>
</dbReference>
<dbReference type="InterPro" id="IPR009008">
    <property type="entry name" value="Val/Leu/Ile-tRNA-synth_edit"/>
</dbReference>
<dbReference type="NCBIfam" id="TIGR00396">
    <property type="entry name" value="leuS_bact"/>
    <property type="match status" value="1"/>
</dbReference>
<dbReference type="PANTHER" id="PTHR43740:SF2">
    <property type="entry name" value="LEUCINE--TRNA LIGASE, MITOCHONDRIAL"/>
    <property type="match status" value="1"/>
</dbReference>
<dbReference type="PANTHER" id="PTHR43740">
    <property type="entry name" value="LEUCYL-TRNA SYNTHETASE"/>
    <property type="match status" value="1"/>
</dbReference>
<dbReference type="Pfam" id="PF08264">
    <property type="entry name" value="Anticodon_1"/>
    <property type="match status" value="1"/>
</dbReference>
<dbReference type="Pfam" id="PF13603">
    <property type="entry name" value="tRNA-synt_1_2"/>
    <property type="match status" value="1"/>
</dbReference>
<dbReference type="Pfam" id="PF09334">
    <property type="entry name" value="tRNA-synt_1g"/>
    <property type="match status" value="1"/>
</dbReference>
<dbReference type="PRINTS" id="PR00985">
    <property type="entry name" value="TRNASYNTHLEU"/>
</dbReference>
<dbReference type="SUPFAM" id="SSF47323">
    <property type="entry name" value="Anticodon-binding domain of a subclass of class I aminoacyl-tRNA synthetases"/>
    <property type="match status" value="1"/>
</dbReference>
<dbReference type="SUPFAM" id="SSF52374">
    <property type="entry name" value="Nucleotidylyl transferase"/>
    <property type="match status" value="1"/>
</dbReference>
<dbReference type="SUPFAM" id="SSF50677">
    <property type="entry name" value="ValRS/IleRS/LeuRS editing domain"/>
    <property type="match status" value="1"/>
</dbReference>
<dbReference type="PROSITE" id="PS00178">
    <property type="entry name" value="AA_TRNA_LIGASE_I"/>
    <property type="match status" value="1"/>
</dbReference>
<gene>
    <name evidence="1" type="primary">leuS</name>
    <name type="ordered locus">MUL_0056</name>
</gene>
<proteinExistence type="inferred from homology"/>
<reference key="1">
    <citation type="journal article" date="2007" name="Genome Res.">
        <title>Reductive evolution and niche adaptation inferred from the genome of Mycobacterium ulcerans, the causative agent of Buruli ulcer.</title>
        <authorList>
            <person name="Stinear T.P."/>
            <person name="Seemann T."/>
            <person name="Pidot S."/>
            <person name="Frigui W."/>
            <person name="Reysset G."/>
            <person name="Garnier T."/>
            <person name="Meurice G."/>
            <person name="Simon D."/>
            <person name="Bouchier C."/>
            <person name="Ma L."/>
            <person name="Tichit M."/>
            <person name="Porter J.L."/>
            <person name="Ryan J."/>
            <person name="Johnson P.D.R."/>
            <person name="Davies J.K."/>
            <person name="Jenkin G.A."/>
            <person name="Small P.L.C."/>
            <person name="Jones L.M."/>
            <person name="Tekaia F."/>
            <person name="Laval F."/>
            <person name="Daffe M."/>
            <person name="Parkhill J."/>
            <person name="Cole S.T."/>
        </authorList>
    </citation>
    <scope>NUCLEOTIDE SEQUENCE [LARGE SCALE GENOMIC DNA]</scope>
    <source>
        <strain>Agy99</strain>
    </source>
</reference>